<organism>
    <name type="scientific">Arabidopsis thaliana</name>
    <name type="common">Mouse-ear cress</name>
    <dbReference type="NCBI Taxonomy" id="3702"/>
    <lineage>
        <taxon>Eukaryota</taxon>
        <taxon>Viridiplantae</taxon>
        <taxon>Streptophyta</taxon>
        <taxon>Embryophyta</taxon>
        <taxon>Tracheophyta</taxon>
        <taxon>Spermatophyta</taxon>
        <taxon>Magnoliopsida</taxon>
        <taxon>eudicotyledons</taxon>
        <taxon>Gunneridae</taxon>
        <taxon>Pentapetalae</taxon>
        <taxon>rosids</taxon>
        <taxon>malvids</taxon>
        <taxon>Brassicales</taxon>
        <taxon>Brassicaceae</taxon>
        <taxon>Camelineae</taxon>
        <taxon>Arabidopsis</taxon>
    </lineage>
</organism>
<dbReference type="EMBL" id="AC006535">
    <property type="protein sequence ID" value="AAF87027.1"/>
    <property type="status" value="ALT_SEQ"/>
    <property type="molecule type" value="Genomic_DNA"/>
</dbReference>
<dbReference type="EMBL" id="CP002684">
    <property type="protein sequence ID" value="AEE30720.1"/>
    <property type="molecule type" value="Genomic_DNA"/>
</dbReference>
<dbReference type="EMBL" id="BT002947">
    <property type="protein sequence ID" value="AAO22760.1"/>
    <property type="molecule type" value="mRNA"/>
</dbReference>
<dbReference type="PIR" id="G86393">
    <property type="entry name" value="G86393"/>
</dbReference>
<dbReference type="RefSeq" id="NP_173990.2">
    <property type="nucleotide sequence ID" value="NM_102431.4"/>
</dbReference>
<dbReference type="SMR" id="Q84WP3"/>
<dbReference type="STRING" id="3702.Q84WP3"/>
<dbReference type="PaxDb" id="3702-AT1G26680.1"/>
<dbReference type="EnsemblPlants" id="AT1G26680.1">
    <property type="protein sequence ID" value="AT1G26680.1"/>
    <property type="gene ID" value="AT1G26680"/>
</dbReference>
<dbReference type="GeneID" id="839209"/>
<dbReference type="Gramene" id="AT1G26680.1">
    <property type="protein sequence ID" value="AT1G26680.1"/>
    <property type="gene ID" value="AT1G26680"/>
</dbReference>
<dbReference type="KEGG" id="ath:AT1G26680"/>
<dbReference type="Araport" id="AT1G26680"/>
<dbReference type="TAIR" id="AT1G26680"/>
<dbReference type="eggNOG" id="ENOG502SK57">
    <property type="taxonomic scope" value="Eukaryota"/>
</dbReference>
<dbReference type="HOGENOM" id="CLU_014437_1_0_1"/>
<dbReference type="InParanoid" id="Q84WP3"/>
<dbReference type="PhylomeDB" id="Q84WP3"/>
<dbReference type="PRO" id="PR:Q84WP3"/>
<dbReference type="Proteomes" id="UP000006548">
    <property type="component" value="Chromosome 1"/>
</dbReference>
<dbReference type="ExpressionAtlas" id="Q84WP3">
    <property type="expression patterns" value="baseline and differential"/>
</dbReference>
<dbReference type="GO" id="GO:0009507">
    <property type="term" value="C:chloroplast"/>
    <property type="evidence" value="ECO:0007005"/>
    <property type="project" value="TAIR"/>
</dbReference>
<dbReference type="GO" id="GO:0005634">
    <property type="term" value="C:nucleus"/>
    <property type="evidence" value="ECO:0007669"/>
    <property type="project" value="UniProtKB-SubCell"/>
</dbReference>
<dbReference type="GO" id="GO:0003677">
    <property type="term" value="F:DNA binding"/>
    <property type="evidence" value="ECO:0007669"/>
    <property type="project" value="UniProtKB-KW"/>
</dbReference>
<dbReference type="CDD" id="cd10017">
    <property type="entry name" value="B3_DNA"/>
    <property type="match status" value="6"/>
</dbReference>
<dbReference type="FunFam" id="2.40.330.10:FF:000005">
    <property type="entry name" value="Transcriptional factor B3 family protein"/>
    <property type="match status" value="5"/>
</dbReference>
<dbReference type="FunFam" id="2.40.330.10:FF:000009">
    <property type="entry name" value="Transcriptional factor B3 family protein"/>
    <property type="match status" value="1"/>
</dbReference>
<dbReference type="Gene3D" id="2.40.330.10">
    <property type="entry name" value="DNA-binding pseudobarrel domain"/>
    <property type="match status" value="6"/>
</dbReference>
<dbReference type="InterPro" id="IPR003340">
    <property type="entry name" value="B3_DNA-bd"/>
</dbReference>
<dbReference type="InterPro" id="IPR015300">
    <property type="entry name" value="DNA-bd_pseudobarrel_sf"/>
</dbReference>
<dbReference type="InterPro" id="IPR039218">
    <property type="entry name" value="REM_fam"/>
</dbReference>
<dbReference type="PANTHER" id="PTHR31674">
    <property type="entry name" value="B3 DOMAIN-CONTAINING PROTEIN REM-LIKE 3-RELATED"/>
    <property type="match status" value="1"/>
</dbReference>
<dbReference type="PANTHER" id="PTHR31674:SF62">
    <property type="entry name" value="B3 DOMAIN-CONTAINING PROTEIN REM14-RELATED"/>
    <property type="match status" value="1"/>
</dbReference>
<dbReference type="Pfam" id="PF02362">
    <property type="entry name" value="B3"/>
    <property type="match status" value="6"/>
</dbReference>
<dbReference type="SMART" id="SM01019">
    <property type="entry name" value="B3"/>
    <property type="match status" value="6"/>
</dbReference>
<dbReference type="SUPFAM" id="SSF101936">
    <property type="entry name" value="DNA-binding pseudobarrel domain"/>
    <property type="match status" value="6"/>
</dbReference>
<dbReference type="PROSITE" id="PS50863">
    <property type="entry name" value="B3"/>
    <property type="match status" value="6"/>
</dbReference>
<comment type="subcellular location">
    <subcellularLocation>
        <location evidence="1">Nucleus</location>
    </subcellularLocation>
</comment>
<comment type="sequence caution" evidence="3">
    <conflict type="erroneous gene model prediction">
        <sequence resource="EMBL-CDS" id="AAF87027"/>
    </conflict>
</comment>
<protein>
    <recommendedName>
        <fullName>B3 domain-containing protein REM17</fullName>
    </recommendedName>
    <alternativeName>
        <fullName>Protein REPRODUCTIVE MERISTEM 17</fullName>
    </alternativeName>
</protein>
<feature type="chain" id="PRO_0000375111" description="B3 domain-containing protein REM17">
    <location>
        <begin position="1"/>
        <end position="920"/>
    </location>
</feature>
<feature type="DNA-binding region" description="TF-B3 1" evidence="1">
    <location>
        <begin position="12"/>
        <end position="105"/>
    </location>
</feature>
<feature type="DNA-binding region" description="TF-B3 2" evidence="1">
    <location>
        <begin position="153"/>
        <end position="250"/>
    </location>
</feature>
<feature type="DNA-binding region" description="TF-B3 3" evidence="1">
    <location>
        <begin position="267"/>
        <end position="361"/>
    </location>
</feature>
<feature type="DNA-binding region" description="TF-B3 4" evidence="1">
    <location>
        <begin position="436"/>
        <end position="531"/>
    </location>
</feature>
<feature type="DNA-binding region" description="TF-B3 5" evidence="1">
    <location>
        <begin position="616"/>
        <end position="714"/>
    </location>
</feature>
<feature type="DNA-binding region" description="TF-B3 6" evidence="1">
    <location>
        <begin position="727"/>
        <end position="823"/>
    </location>
</feature>
<feature type="region of interest" description="Disordered" evidence="2">
    <location>
        <begin position="405"/>
        <end position="438"/>
    </location>
</feature>
<feature type="region of interest" description="Disordered" evidence="2">
    <location>
        <begin position="540"/>
        <end position="562"/>
    </location>
</feature>
<feature type="region of interest" description="Disordered" evidence="2">
    <location>
        <begin position="585"/>
        <end position="614"/>
    </location>
</feature>
<feature type="region of interest" description="Disordered" evidence="2">
    <location>
        <begin position="842"/>
        <end position="870"/>
    </location>
</feature>
<feature type="compositionally biased region" description="Basic and acidic residues" evidence="2">
    <location>
        <begin position="423"/>
        <end position="432"/>
    </location>
</feature>
<feature type="compositionally biased region" description="Low complexity" evidence="2">
    <location>
        <begin position="842"/>
        <end position="852"/>
    </location>
</feature>
<feature type="sequence conflict" description="In Ref. 3; AAO22760." evidence="3" ref="3">
    <original>M</original>
    <variation>T</variation>
    <location>
        <position position="209"/>
    </location>
</feature>
<evidence type="ECO:0000255" key="1">
    <source>
        <dbReference type="PROSITE-ProRule" id="PRU00326"/>
    </source>
</evidence>
<evidence type="ECO:0000256" key="2">
    <source>
        <dbReference type="SAM" id="MobiDB-lite"/>
    </source>
</evidence>
<evidence type="ECO:0000305" key="3"/>
<sequence>MADQSLLHSPINPHFFQPILTESRTHLNIPVAFFSKHVEGRNNQNKTVTLRSDASDKTWLVKMDGLKLTDGWEDFAFAHDLRTGDIVVFRLEGEMVFHVTALGPSCCEIQYHTSSHNINDDDRNDQINIASRNSSRVKKNPRKKVESSLDHSRFVAKVSAWCLSNDRLYIPLSFARLNGLNKINSKKIYLQNEEGRSWKLVLRHDKSGMQTFVQSGWRRFCSENGIRQGQYTFKLVRKSAPPVIRLCRAKAKPKQRSVAEYSSDHSCFEGSVTPSSLRNDLLYLPRSFVNSNRLDKRCSEIVLKNEQGVKWPLVLKRFKSVTYLPKGWTSFCQVNRIKAGDSFKFKLVGTWKKPVLSLCPTQSNNHKTPLECSEGNKSEESEEDCLEVKKKKYWSRCRASVENMDDDQTNIGNSSRKKRVSKNPREKVESSSDHSSFVGSVNPSSLYKDQLYLPRNFVSSNFLDKRCSEIVLKNERGEKRTLVLKHFKKDLTFLKKGWTSFCQVNRIKAGDSFKFKLVGTWNKPVLSLCPTETNYHKTPLACSEGNKSEESEEEGTEDKNTSQDCLEVKKRKYWSTCRASAENIDDDQTNIGNSSKEKRVKKNPVKKAESSSDHSSFVANVTASSLNYDRLYLPLSFVSSNGLDKMNGKEIVLLNEEGLSWKFNLKYNQAGKHTYVRPGWSRFCDANGMSQGQQFTFKLVQKHGPPVMYLSLSEHRPKSESSSHRSYFVGSVTASSIKKDKLYLWKSFVSSNGLDKGCKKIILKNKWGREWKLVLKHYKSNCFTIIKRGWTSFCQGNGLKAGDSFKFKLVGTGEKPVLSLCPAESSHEKIPLECPEGIDDVNSLSSNPSSGDDSSRSEESEEENMEDKNISQDCLETKKRKYCSSSSYSQNRFVTLTLTRSAFQTYKLVSFFNNYASRLS</sequence>
<reference key="1">
    <citation type="journal article" date="2000" name="Nature">
        <title>Sequence and analysis of chromosome 1 of the plant Arabidopsis thaliana.</title>
        <authorList>
            <person name="Theologis A."/>
            <person name="Ecker J.R."/>
            <person name="Palm C.J."/>
            <person name="Federspiel N.A."/>
            <person name="Kaul S."/>
            <person name="White O."/>
            <person name="Alonso J."/>
            <person name="Altafi H."/>
            <person name="Araujo R."/>
            <person name="Bowman C.L."/>
            <person name="Brooks S.Y."/>
            <person name="Buehler E."/>
            <person name="Chan A."/>
            <person name="Chao Q."/>
            <person name="Chen H."/>
            <person name="Cheuk R.F."/>
            <person name="Chin C.W."/>
            <person name="Chung M.K."/>
            <person name="Conn L."/>
            <person name="Conway A.B."/>
            <person name="Conway A.R."/>
            <person name="Creasy T.H."/>
            <person name="Dewar K."/>
            <person name="Dunn P."/>
            <person name="Etgu P."/>
            <person name="Feldblyum T.V."/>
            <person name="Feng J.-D."/>
            <person name="Fong B."/>
            <person name="Fujii C.Y."/>
            <person name="Gill J.E."/>
            <person name="Goldsmith A.D."/>
            <person name="Haas B."/>
            <person name="Hansen N.F."/>
            <person name="Hughes B."/>
            <person name="Huizar L."/>
            <person name="Hunter J.L."/>
            <person name="Jenkins J."/>
            <person name="Johnson-Hopson C."/>
            <person name="Khan S."/>
            <person name="Khaykin E."/>
            <person name="Kim C.J."/>
            <person name="Koo H.L."/>
            <person name="Kremenetskaia I."/>
            <person name="Kurtz D.B."/>
            <person name="Kwan A."/>
            <person name="Lam B."/>
            <person name="Langin-Hooper S."/>
            <person name="Lee A."/>
            <person name="Lee J.M."/>
            <person name="Lenz C.A."/>
            <person name="Li J.H."/>
            <person name="Li Y.-P."/>
            <person name="Lin X."/>
            <person name="Liu S.X."/>
            <person name="Liu Z.A."/>
            <person name="Luros J.S."/>
            <person name="Maiti R."/>
            <person name="Marziali A."/>
            <person name="Militscher J."/>
            <person name="Miranda M."/>
            <person name="Nguyen M."/>
            <person name="Nierman W.C."/>
            <person name="Osborne B.I."/>
            <person name="Pai G."/>
            <person name="Peterson J."/>
            <person name="Pham P.K."/>
            <person name="Rizzo M."/>
            <person name="Rooney T."/>
            <person name="Rowley D."/>
            <person name="Sakano H."/>
            <person name="Salzberg S.L."/>
            <person name="Schwartz J.R."/>
            <person name="Shinn P."/>
            <person name="Southwick A.M."/>
            <person name="Sun H."/>
            <person name="Tallon L.J."/>
            <person name="Tambunga G."/>
            <person name="Toriumi M.J."/>
            <person name="Town C.D."/>
            <person name="Utterback T."/>
            <person name="Van Aken S."/>
            <person name="Vaysberg M."/>
            <person name="Vysotskaia V.S."/>
            <person name="Walker M."/>
            <person name="Wu D."/>
            <person name="Yu G."/>
            <person name="Fraser C.M."/>
            <person name="Venter J.C."/>
            <person name="Davis R.W."/>
        </authorList>
    </citation>
    <scope>NUCLEOTIDE SEQUENCE [LARGE SCALE GENOMIC DNA]</scope>
    <source>
        <strain>cv. Columbia</strain>
    </source>
</reference>
<reference key="2">
    <citation type="journal article" date="2017" name="Plant J.">
        <title>Araport11: a complete reannotation of the Arabidopsis thaliana reference genome.</title>
        <authorList>
            <person name="Cheng C.Y."/>
            <person name="Krishnakumar V."/>
            <person name="Chan A.P."/>
            <person name="Thibaud-Nissen F."/>
            <person name="Schobel S."/>
            <person name="Town C.D."/>
        </authorList>
    </citation>
    <scope>GENOME REANNOTATION</scope>
    <source>
        <strain>cv. Columbia</strain>
    </source>
</reference>
<reference key="3">
    <citation type="journal article" date="2003" name="Science">
        <title>Empirical analysis of transcriptional activity in the Arabidopsis genome.</title>
        <authorList>
            <person name="Yamada K."/>
            <person name="Lim J."/>
            <person name="Dale J.M."/>
            <person name="Chen H."/>
            <person name="Shinn P."/>
            <person name="Palm C.J."/>
            <person name="Southwick A.M."/>
            <person name="Wu H.C."/>
            <person name="Kim C.J."/>
            <person name="Nguyen M."/>
            <person name="Pham P.K."/>
            <person name="Cheuk R.F."/>
            <person name="Karlin-Newmann G."/>
            <person name="Liu S.X."/>
            <person name="Lam B."/>
            <person name="Sakano H."/>
            <person name="Wu T."/>
            <person name="Yu G."/>
            <person name="Miranda M."/>
            <person name="Quach H.L."/>
            <person name="Tripp M."/>
            <person name="Chang C.H."/>
            <person name="Lee J.M."/>
            <person name="Toriumi M.J."/>
            <person name="Chan M.M."/>
            <person name="Tang C.C."/>
            <person name="Onodera C.S."/>
            <person name="Deng J.M."/>
            <person name="Akiyama K."/>
            <person name="Ansari Y."/>
            <person name="Arakawa T."/>
            <person name="Banh J."/>
            <person name="Banno F."/>
            <person name="Bowser L."/>
            <person name="Brooks S.Y."/>
            <person name="Carninci P."/>
            <person name="Chao Q."/>
            <person name="Choy N."/>
            <person name="Enju A."/>
            <person name="Goldsmith A.D."/>
            <person name="Gurjal M."/>
            <person name="Hansen N.F."/>
            <person name="Hayashizaki Y."/>
            <person name="Johnson-Hopson C."/>
            <person name="Hsuan V.W."/>
            <person name="Iida K."/>
            <person name="Karnes M."/>
            <person name="Khan S."/>
            <person name="Koesema E."/>
            <person name="Ishida J."/>
            <person name="Jiang P.X."/>
            <person name="Jones T."/>
            <person name="Kawai J."/>
            <person name="Kamiya A."/>
            <person name="Meyers C."/>
            <person name="Nakajima M."/>
            <person name="Narusaka M."/>
            <person name="Seki M."/>
            <person name="Sakurai T."/>
            <person name="Satou M."/>
            <person name="Tamse R."/>
            <person name="Vaysberg M."/>
            <person name="Wallender E.K."/>
            <person name="Wong C."/>
            <person name="Yamamura Y."/>
            <person name="Yuan S."/>
            <person name="Shinozaki K."/>
            <person name="Davis R.W."/>
            <person name="Theologis A."/>
            <person name="Ecker J.R."/>
        </authorList>
    </citation>
    <scope>NUCLEOTIDE SEQUENCE [LARGE SCALE MRNA]</scope>
    <source>
        <strain>cv. Columbia</strain>
    </source>
</reference>
<reference key="4">
    <citation type="journal article" date="2008" name="Trends Plant Sci.">
        <title>The plant B3 superfamily.</title>
        <authorList>
            <person name="Swaminathan K."/>
            <person name="Peterson K."/>
            <person name="Jack T."/>
        </authorList>
    </citation>
    <scope>GENE FAMILY</scope>
</reference>
<accession>Q84WP3</accession>
<accession>Q9LQY4</accession>
<proteinExistence type="evidence at transcript level"/>
<gene>
    <name type="primary">REM17</name>
    <name type="ordered locus">At1g26680</name>
    <name type="ORF">T24P13.6</name>
</gene>
<keyword id="KW-0238">DNA-binding</keyword>
<keyword id="KW-0539">Nucleus</keyword>
<keyword id="KW-1185">Reference proteome</keyword>
<keyword id="KW-0677">Repeat</keyword>
<keyword id="KW-0804">Transcription</keyword>
<keyword id="KW-0805">Transcription regulation</keyword>
<name>REM17_ARATH</name>